<dbReference type="EC" id="2.7.7.6" evidence="1"/>
<dbReference type="EMBL" id="DQ226511">
    <property type="protein sequence ID" value="ABB20989.1"/>
    <property type="molecule type" value="Genomic_DNA"/>
</dbReference>
<dbReference type="RefSeq" id="YP_762293.1">
    <property type="nucleotide sequence ID" value="NC_008359.1"/>
</dbReference>
<dbReference type="SMR" id="Q09WY5"/>
<dbReference type="GeneID" id="4290629"/>
<dbReference type="GO" id="GO:0009507">
    <property type="term" value="C:chloroplast"/>
    <property type="evidence" value="ECO:0007669"/>
    <property type="project" value="UniProtKB-SubCell"/>
</dbReference>
<dbReference type="GO" id="GO:0000428">
    <property type="term" value="C:DNA-directed RNA polymerase complex"/>
    <property type="evidence" value="ECO:0007669"/>
    <property type="project" value="UniProtKB-KW"/>
</dbReference>
<dbReference type="GO" id="GO:0005739">
    <property type="term" value="C:mitochondrion"/>
    <property type="evidence" value="ECO:0007669"/>
    <property type="project" value="GOC"/>
</dbReference>
<dbReference type="GO" id="GO:0003677">
    <property type="term" value="F:DNA binding"/>
    <property type="evidence" value="ECO:0007669"/>
    <property type="project" value="UniProtKB-UniRule"/>
</dbReference>
<dbReference type="GO" id="GO:0003899">
    <property type="term" value="F:DNA-directed RNA polymerase activity"/>
    <property type="evidence" value="ECO:0007669"/>
    <property type="project" value="UniProtKB-UniRule"/>
</dbReference>
<dbReference type="GO" id="GO:0046983">
    <property type="term" value="F:protein dimerization activity"/>
    <property type="evidence" value="ECO:0007669"/>
    <property type="project" value="InterPro"/>
</dbReference>
<dbReference type="GO" id="GO:0006351">
    <property type="term" value="P:DNA-templated transcription"/>
    <property type="evidence" value="ECO:0007669"/>
    <property type="project" value="UniProtKB-UniRule"/>
</dbReference>
<dbReference type="CDD" id="cd06928">
    <property type="entry name" value="RNAP_alpha_NTD"/>
    <property type="match status" value="1"/>
</dbReference>
<dbReference type="FunFam" id="2.170.120.12:FF:000001">
    <property type="entry name" value="DNA-directed RNA polymerase subunit alpha"/>
    <property type="match status" value="1"/>
</dbReference>
<dbReference type="Gene3D" id="1.10.150.20">
    <property type="entry name" value="5' to 3' exonuclease, C-terminal subdomain"/>
    <property type="match status" value="1"/>
</dbReference>
<dbReference type="Gene3D" id="2.170.120.12">
    <property type="entry name" value="DNA-directed RNA polymerase, insert domain"/>
    <property type="match status" value="1"/>
</dbReference>
<dbReference type="Gene3D" id="3.30.1360.10">
    <property type="entry name" value="RNA polymerase, RBP11-like subunit"/>
    <property type="match status" value="1"/>
</dbReference>
<dbReference type="HAMAP" id="MF_00059">
    <property type="entry name" value="RNApol_bact_RpoA"/>
    <property type="match status" value="1"/>
</dbReference>
<dbReference type="InterPro" id="IPR011262">
    <property type="entry name" value="DNA-dir_RNA_pol_insert"/>
</dbReference>
<dbReference type="InterPro" id="IPR011263">
    <property type="entry name" value="DNA-dir_RNA_pol_RpoA/D/Rpb3"/>
</dbReference>
<dbReference type="InterPro" id="IPR011773">
    <property type="entry name" value="DNA-dir_RpoA"/>
</dbReference>
<dbReference type="InterPro" id="IPR036603">
    <property type="entry name" value="RBP11-like"/>
</dbReference>
<dbReference type="InterPro" id="IPR011260">
    <property type="entry name" value="RNAP_asu_C"/>
</dbReference>
<dbReference type="InterPro" id="IPR036643">
    <property type="entry name" value="RNApol_insert_sf"/>
</dbReference>
<dbReference type="NCBIfam" id="TIGR02027">
    <property type="entry name" value="rpoA"/>
    <property type="match status" value="1"/>
</dbReference>
<dbReference type="Pfam" id="PF01000">
    <property type="entry name" value="RNA_pol_A_bac"/>
    <property type="match status" value="1"/>
</dbReference>
<dbReference type="Pfam" id="PF03118">
    <property type="entry name" value="RNA_pol_A_CTD"/>
    <property type="match status" value="1"/>
</dbReference>
<dbReference type="Pfam" id="PF01193">
    <property type="entry name" value="RNA_pol_L"/>
    <property type="match status" value="1"/>
</dbReference>
<dbReference type="SMART" id="SM00662">
    <property type="entry name" value="RPOLD"/>
    <property type="match status" value="1"/>
</dbReference>
<dbReference type="SUPFAM" id="SSF47789">
    <property type="entry name" value="C-terminal domain of RNA polymerase alpha subunit"/>
    <property type="match status" value="1"/>
</dbReference>
<dbReference type="SUPFAM" id="SSF56553">
    <property type="entry name" value="Insert subdomain of RNA polymerase alpha subunit"/>
    <property type="match status" value="1"/>
</dbReference>
<dbReference type="SUPFAM" id="SSF55257">
    <property type="entry name" value="RBP11-like subunits of RNA polymerase"/>
    <property type="match status" value="1"/>
</dbReference>
<evidence type="ECO:0000255" key="1">
    <source>
        <dbReference type="HAMAP-Rule" id="MF_00059"/>
    </source>
</evidence>
<protein>
    <recommendedName>
        <fullName evidence="1">DNA-directed RNA polymerase subunit alpha</fullName>
        <shortName evidence="1">PEP</shortName>
        <ecNumber evidence="1">2.7.7.6</ecNumber>
    </recommendedName>
    <alternativeName>
        <fullName evidence="1">Plastid-encoded RNA polymerase subunit alpha</fullName>
        <shortName evidence="1">RNA polymerase subunit alpha</shortName>
    </alternativeName>
</protein>
<sequence>MGQEKVTVSTRPLQWKCVESRADSKRLYYGRFLLAPLMRGQADTIGIAMRRALLGEIEGTCITRAKSEKIPHEYSTIVGIQESVHEILMNLKEIVLRSNLYGTRDASICVKGPGYVTAQDIILPPSVEIVDNTQHIANLTEPITLCIELQIERNRGYRIKTPNNFQNGSYPIDAVFMPVRNANHSIHSYVNGNENQEILFLEIWTNGSLTPKEALHEASRNLIDLFIPFFHAEEHLENNQHKGTLPLFNFHGRLAKPRKTKKEIALKYIYIDQSELPPRVYNCLKRSNINTFLELLNNSQEELMKIQDFRIEDVKHILDVLEI</sequence>
<geneLocation type="chloroplast"/>
<keyword id="KW-0150">Chloroplast</keyword>
<keyword id="KW-0240">DNA-directed RNA polymerase</keyword>
<keyword id="KW-0548">Nucleotidyltransferase</keyword>
<keyword id="KW-0934">Plastid</keyword>
<keyword id="KW-0804">Transcription</keyword>
<keyword id="KW-0808">Transferase</keyword>
<proteinExistence type="inferred from homology"/>
<gene>
    <name evidence="1" type="primary">rpoA</name>
    <name type="ordered locus">MoinCp053</name>
</gene>
<feature type="chain" id="PRO_0000275691" description="DNA-directed RNA polymerase subunit alpha">
    <location>
        <begin position="1"/>
        <end position="323"/>
    </location>
</feature>
<feature type="region of interest" description="Alpha N-terminal domain (alpha-NTD)" evidence="1">
    <location>
        <begin position="1"/>
        <end position="233"/>
    </location>
</feature>
<feature type="region of interest" description="Alpha C-terminal domain (alpha-CTD)" evidence="1">
    <location>
        <begin position="264"/>
        <end position="323"/>
    </location>
</feature>
<reference key="1">
    <citation type="submission" date="2005-09" db="EMBL/GenBank/DDBJ databases">
        <title>The chloroplast genome of mulberry: structural features and comparative analysis.</title>
        <authorList>
            <person name="Ravi V."/>
            <person name="Khurana J.P."/>
            <person name="Tyagi A.K."/>
            <person name="Khurana P."/>
        </authorList>
    </citation>
    <scope>NUCLEOTIDE SEQUENCE [LARGE SCALE GENOMIC DNA]</scope>
    <source>
        <strain>cv. K2</strain>
    </source>
</reference>
<organism>
    <name type="scientific">Morus indica</name>
    <name type="common">Mulberry</name>
    <dbReference type="NCBI Taxonomy" id="248361"/>
    <lineage>
        <taxon>Eukaryota</taxon>
        <taxon>Viridiplantae</taxon>
        <taxon>Streptophyta</taxon>
        <taxon>Embryophyta</taxon>
        <taxon>Tracheophyta</taxon>
        <taxon>Spermatophyta</taxon>
        <taxon>Magnoliopsida</taxon>
        <taxon>eudicotyledons</taxon>
        <taxon>Gunneridae</taxon>
        <taxon>Pentapetalae</taxon>
        <taxon>rosids</taxon>
        <taxon>fabids</taxon>
        <taxon>Rosales</taxon>
        <taxon>Moraceae</taxon>
        <taxon>Moreae</taxon>
        <taxon>Morus</taxon>
    </lineage>
</organism>
<name>RPOA_MORIN</name>
<accession>Q09WY5</accession>
<comment type="function">
    <text evidence="1">DNA-dependent RNA polymerase catalyzes the transcription of DNA into RNA using the four ribonucleoside triphosphates as substrates.</text>
</comment>
<comment type="catalytic activity">
    <reaction evidence="1">
        <text>RNA(n) + a ribonucleoside 5'-triphosphate = RNA(n+1) + diphosphate</text>
        <dbReference type="Rhea" id="RHEA:21248"/>
        <dbReference type="Rhea" id="RHEA-COMP:14527"/>
        <dbReference type="Rhea" id="RHEA-COMP:17342"/>
        <dbReference type="ChEBI" id="CHEBI:33019"/>
        <dbReference type="ChEBI" id="CHEBI:61557"/>
        <dbReference type="ChEBI" id="CHEBI:140395"/>
        <dbReference type="EC" id="2.7.7.6"/>
    </reaction>
</comment>
<comment type="subunit">
    <text evidence="1">In plastids the minimal PEP RNA polymerase catalytic core is composed of four subunits: alpha, beta, beta', and beta''. When a (nuclear-encoded) sigma factor is associated with the core the holoenzyme is formed, which can initiate transcription.</text>
</comment>
<comment type="subcellular location">
    <subcellularLocation>
        <location>Plastid</location>
        <location>Chloroplast</location>
    </subcellularLocation>
</comment>
<comment type="domain">
    <text evidence="1">The N-terminal domain is essential for RNAP assembly and basal transcription, whereas the C-terminal domain is involved in interaction with transcriptional regulators and with upstream promoter elements.</text>
</comment>
<comment type="similarity">
    <text evidence="1">Belongs to the RNA polymerase alpha chain family.</text>
</comment>